<proteinExistence type="inferred from homology"/>
<sequence>MVLAHSINTNPNTNTNTNNTSTTSSTTTIPNDSKILCINFNQDQGCFAISHEQGFLVYNTDPIELRVKRNFIVNSHTTSSRSNHSNGSNSNNNHRNNSTGSNGSVSSSGSNNETTLGYKSTHKSASGSGSGSGSGIGHISMLHRTNYLALIGGGENPKFPINKLIIWDDLKRKTSLSLEFDTPVLNVLLSRVRIIVVLIDQIIVYGFAAPPKKFQTFNTINNPLGIADLSVNSQQSNVHLYNNYSSNSAQAQVSGTTTTTHYDFSKRKSLSPTNSSNSSSTSLKENGTNLTTYPSPSSTTSASASVATITNTPEAATTANPTTATTTATTTATTTTTTTSAKPLVNGIGSSYQTLAFPGRSMGQIQIVDVGNNHHSGTNIKPTINIIKAHKSNIRCLCLNRTGTLIASASITGTIIRIHSTRTTALLYEFRRGIDRAIITSMKFSHDDSKLAVLSDKHTLHVYNIDETQYPNDGGSGGTKDGGGGGRGSKNRHHLLNGLLPYLPNYFQSTWSFCSVNTNKYHTSDLEDNSQQQQQQWVANGTGGGGVDEGVIGWSGNDSIIIIWKLKKIWEKYVIVETENHQYDLIRSSWKRLDS</sequence>
<reference key="1">
    <citation type="journal article" date="2004" name="Proc. Natl. Acad. Sci. U.S.A.">
        <title>The diploid genome sequence of Candida albicans.</title>
        <authorList>
            <person name="Jones T."/>
            <person name="Federspiel N.A."/>
            <person name="Chibana H."/>
            <person name="Dungan J."/>
            <person name="Kalman S."/>
            <person name="Magee B.B."/>
            <person name="Newport G."/>
            <person name="Thorstenson Y.R."/>
            <person name="Agabian N."/>
            <person name="Magee P.T."/>
            <person name="Davis R.W."/>
            <person name="Scherer S."/>
        </authorList>
    </citation>
    <scope>NUCLEOTIDE SEQUENCE [LARGE SCALE GENOMIC DNA]</scope>
    <source>
        <strain>SC5314 / ATCC MYA-2876</strain>
    </source>
</reference>
<reference key="2">
    <citation type="journal article" date="2007" name="Genome Biol.">
        <title>Assembly of the Candida albicans genome into sixteen supercontigs aligned on the eight chromosomes.</title>
        <authorList>
            <person name="van het Hoog M."/>
            <person name="Rast T.J."/>
            <person name="Martchenko M."/>
            <person name="Grindle S."/>
            <person name="Dignard D."/>
            <person name="Hogues H."/>
            <person name="Cuomo C."/>
            <person name="Berriman M."/>
            <person name="Scherer S."/>
            <person name="Magee B.B."/>
            <person name="Whiteway M."/>
            <person name="Chibana H."/>
            <person name="Nantel A."/>
            <person name="Magee P.T."/>
        </authorList>
    </citation>
    <scope>GENOME REANNOTATION</scope>
    <source>
        <strain>SC5314 / ATCC MYA-2876</strain>
    </source>
</reference>
<reference key="3">
    <citation type="journal article" date="2013" name="Genome Biol.">
        <title>Assembly of a phased diploid Candida albicans genome facilitates allele-specific measurements and provides a simple model for repeat and indel structure.</title>
        <authorList>
            <person name="Muzzey D."/>
            <person name="Schwartz K."/>
            <person name="Weissman J.S."/>
            <person name="Sherlock G."/>
        </authorList>
    </citation>
    <scope>NUCLEOTIDE SEQUENCE [LARGE SCALE GENOMIC DNA]</scope>
    <scope>GENOME REANNOTATION</scope>
    <source>
        <strain>SC5314 / ATCC MYA-2876</strain>
    </source>
</reference>
<dbReference type="EMBL" id="CP017626">
    <property type="protein sequence ID" value="AOW29274.1"/>
    <property type="molecule type" value="Genomic_DNA"/>
</dbReference>
<dbReference type="RefSeq" id="XP_711441.1">
    <property type="nucleotide sequence ID" value="XM_706349.2"/>
</dbReference>
<dbReference type="SMR" id="Q59P11"/>
<dbReference type="FunCoup" id="Q59P11">
    <property type="interactions" value="400"/>
</dbReference>
<dbReference type="STRING" id="237561.Q59P11"/>
<dbReference type="EnsemblFungi" id="C4_05350W_A-T">
    <property type="protein sequence ID" value="C4_05350W_A-T-p1"/>
    <property type="gene ID" value="C4_05350W_A"/>
</dbReference>
<dbReference type="GeneID" id="3646948"/>
<dbReference type="KEGG" id="cal:CAALFM_C405350WA"/>
<dbReference type="CGD" id="CAL0000194175">
    <property type="gene designation" value="orf19.9359"/>
</dbReference>
<dbReference type="VEuPathDB" id="FungiDB:C4_05350W_A"/>
<dbReference type="eggNOG" id="KOG2111">
    <property type="taxonomic scope" value="Eukaryota"/>
</dbReference>
<dbReference type="HOGENOM" id="CLU_025895_0_1_1"/>
<dbReference type="InParanoid" id="Q59P11"/>
<dbReference type="OMA" id="GGPQCMC"/>
<dbReference type="OrthoDB" id="1667587at2759"/>
<dbReference type="PRO" id="PR:Q59P11"/>
<dbReference type="Proteomes" id="UP000000559">
    <property type="component" value="Chromosome 4"/>
</dbReference>
<dbReference type="GO" id="GO:0030659">
    <property type="term" value="C:cytoplasmic vesicle membrane"/>
    <property type="evidence" value="ECO:0007669"/>
    <property type="project" value="UniProtKB-SubCell"/>
</dbReference>
<dbReference type="GO" id="GO:0005829">
    <property type="term" value="C:cytosol"/>
    <property type="evidence" value="ECO:0000318"/>
    <property type="project" value="GO_Central"/>
</dbReference>
<dbReference type="GO" id="GO:0034045">
    <property type="term" value="C:phagophore assembly site membrane"/>
    <property type="evidence" value="ECO:0000318"/>
    <property type="project" value="GO_Central"/>
</dbReference>
<dbReference type="GO" id="GO:0005774">
    <property type="term" value="C:vacuolar membrane"/>
    <property type="evidence" value="ECO:0007669"/>
    <property type="project" value="UniProtKB-SubCell"/>
</dbReference>
<dbReference type="GO" id="GO:0080025">
    <property type="term" value="F:phosphatidylinositol-3,5-bisphosphate binding"/>
    <property type="evidence" value="ECO:0000318"/>
    <property type="project" value="GO_Central"/>
</dbReference>
<dbReference type="GO" id="GO:0032266">
    <property type="term" value="F:phosphatidylinositol-3-phosphate binding"/>
    <property type="evidence" value="ECO:0000318"/>
    <property type="project" value="GO_Central"/>
</dbReference>
<dbReference type="GO" id="GO:0030674">
    <property type="term" value="F:protein-macromolecule adaptor activity"/>
    <property type="evidence" value="ECO:0000318"/>
    <property type="project" value="GO_Central"/>
</dbReference>
<dbReference type="GO" id="GO:0000422">
    <property type="term" value="P:autophagy of mitochondrion"/>
    <property type="evidence" value="ECO:0000318"/>
    <property type="project" value="GO_Central"/>
</dbReference>
<dbReference type="GO" id="GO:0061723">
    <property type="term" value="P:glycophagy"/>
    <property type="evidence" value="ECO:0000318"/>
    <property type="project" value="GO_Central"/>
</dbReference>
<dbReference type="GO" id="GO:0044804">
    <property type="term" value="P:nucleophagy"/>
    <property type="evidence" value="ECO:0000318"/>
    <property type="project" value="GO_Central"/>
</dbReference>
<dbReference type="GO" id="GO:0000425">
    <property type="term" value="P:pexophagy"/>
    <property type="evidence" value="ECO:0000318"/>
    <property type="project" value="GO_Central"/>
</dbReference>
<dbReference type="GO" id="GO:0034497">
    <property type="term" value="P:protein localization to phagophore assembly site"/>
    <property type="evidence" value="ECO:0000318"/>
    <property type="project" value="GO_Central"/>
</dbReference>
<dbReference type="GO" id="GO:0015031">
    <property type="term" value="P:protein transport"/>
    <property type="evidence" value="ECO:0007669"/>
    <property type="project" value="UniProtKB-KW"/>
</dbReference>
<dbReference type="Gene3D" id="2.130.10.10">
    <property type="entry name" value="YVTN repeat-like/Quinoprotein amine dehydrogenase"/>
    <property type="match status" value="1"/>
</dbReference>
<dbReference type="InterPro" id="IPR048720">
    <property type="entry name" value="PROPPIN"/>
</dbReference>
<dbReference type="InterPro" id="IPR015943">
    <property type="entry name" value="WD40/YVTN_repeat-like_dom_sf"/>
</dbReference>
<dbReference type="InterPro" id="IPR036322">
    <property type="entry name" value="WD40_repeat_dom_sf"/>
</dbReference>
<dbReference type="InterPro" id="IPR001680">
    <property type="entry name" value="WD40_rpt"/>
</dbReference>
<dbReference type="PANTHER" id="PTHR11227">
    <property type="entry name" value="WD-REPEAT PROTEIN INTERACTING WITH PHOSPHOINOSIDES WIPI -RELATED"/>
    <property type="match status" value="1"/>
</dbReference>
<dbReference type="Pfam" id="PF21032">
    <property type="entry name" value="PROPPIN"/>
    <property type="match status" value="1"/>
</dbReference>
<dbReference type="SMART" id="SM00320">
    <property type="entry name" value="WD40"/>
    <property type="match status" value="3"/>
</dbReference>
<dbReference type="SUPFAM" id="SSF50978">
    <property type="entry name" value="WD40 repeat-like"/>
    <property type="match status" value="1"/>
</dbReference>
<keyword id="KW-0968">Cytoplasmic vesicle</keyword>
<keyword id="KW-0472">Membrane</keyword>
<keyword id="KW-0653">Protein transport</keyword>
<keyword id="KW-1185">Reference proteome</keyword>
<keyword id="KW-0677">Repeat</keyword>
<keyword id="KW-0813">Transport</keyword>
<keyword id="KW-0926">Vacuole</keyword>
<keyword id="KW-0853">WD repeat</keyword>
<feature type="chain" id="PRO_0000051025" description="SVP1-like protein 2">
    <location>
        <begin position="1"/>
        <end position="595"/>
    </location>
</feature>
<feature type="repeat" description="WD 1">
    <location>
        <begin position="30"/>
        <end position="68"/>
    </location>
</feature>
<feature type="repeat" description="WD 2">
    <location>
        <begin position="389"/>
        <end position="429"/>
    </location>
</feature>
<feature type="repeat" description="WD 3">
    <location>
        <begin position="434"/>
        <end position="473"/>
    </location>
</feature>
<feature type="region of interest" description="Disordered" evidence="2">
    <location>
        <begin position="1"/>
        <end position="28"/>
    </location>
</feature>
<feature type="region of interest" description="Disordered" evidence="2">
    <location>
        <begin position="76"/>
        <end position="132"/>
    </location>
</feature>
<feature type="region of interest" description="Disordered" evidence="2">
    <location>
        <begin position="264"/>
        <end position="342"/>
    </location>
</feature>
<feature type="region of interest" description="Disordered" evidence="2">
    <location>
        <begin position="467"/>
        <end position="490"/>
    </location>
</feature>
<feature type="compositionally biased region" description="Low complexity" evidence="2">
    <location>
        <begin position="76"/>
        <end position="112"/>
    </location>
</feature>
<feature type="compositionally biased region" description="Low complexity" evidence="2">
    <location>
        <begin position="270"/>
        <end position="339"/>
    </location>
</feature>
<feature type="compositionally biased region" description="Gly residues" evidence="2">
    <location>
        <begin position="474"/>
        <end position="488"/>
    </location>
</feature>
<gene>
    <name type="primary">HSV2</name>
    <name type="ordered locus">CAALFM_C405350WA</name>
    <name type="ORF">CaO19.1793</name>
    <name type="ORF">CaO19.9359</name>
</gene>
<name>HSV2_CANAL</name>
<protein>
    <recommendedName>
        <fullName>SVP1-like protein 2</fullName>
    </recommendedName>
</protein>
<comment type="function">
    <text evidence="1">Involved in mitochondrial or peroxisomal functions and amino acid signaling pathways.</text>
</comment>
<comment type="subcellular location">
    <subcellularLocation>
        <location evidence="1">Vacuole membrane</location>
        <topology evidence="1">Peripheral membrane protein</topology>
    </subcellularLocation>
    <subcellularLocation>
        <location evidence="1">Cytoplasmic vesicle membrane</location>
        <topology evidence="1">Peripheral membrane protein</topology>
    </subcellularLocation>
    <text evidence="1">Vesicular and vacuolar.</text>
</comment>
<comment type="domain">
    <text evidence="1">May contain a beta-propeller domain involved in specific binding to phosphatidylinositol 3,5-bisphosphate (PIP2), leading to the association of the protein to the membrane.</text>
</comment>
<comment type="similarity">
    <text evidence="3">Belongs to the WD repeat PROPPIN family.</text>
</comment>
<accession>Q59P11</accession>
<accession>A0A1D8PMA8</accession>
<organism>
    <name type="scientific">Candida albicans (strain SC5314 / ATCC MYA-2876)</name>
    <name type="common">Yeast</name>
    <dbReference type="NCBI Taxonomy" id="237561"/>
    <lineage>
        <taxon>Eukaryota</taxon>
        <taxon>Fungi</taxon>
        <taxon>Dikarya</taxon>
        <taxon>Ascomycota</taxon>
        <taxon>Saccharomycotina</taxon>
        <taxon>Pichiomycetes</taxon>
        <taxon>Debaryomycetaceae</taxon>
        <taxon>Candida/Lodderomyces clade</taxon>
        <taxon>Candida</taxon>
    </lineage>
</organism>
<evidence type="ECO:0000250" key="1"/>
<evidence type="ECO:0000256" key="2">
    <source>
        <dbReference type="SAM" id="MobiDB-lite"/>
    </source>
</evidence>
<evidence type="ECO:0000305" key="3"/>